<sequence length="569" mass="64093">MFFSKMLIPTLKEAPSDADIVSVKLMVRSGMIRKLASGFYELLPLGLKVLRKVENIIRQEMNSAGGQEVIFPLVFPKALWLETDRWNAYGKELFKLKDRKDAEFCLAPTAEEVVTDLIRKDIKSYKQLPVMLYQFGTKFRDEIRPRFGVMRSREFLMKDAYSFHADEADLEKYYKTMFDAYTNICIKCGFQFRAVEAASGVIGGSFSHEFMVLTDTGEEEMTWCSCGYGANSAKTECLKIEQSKEEPLPSEEIFTTDVCAIEDVAKLLNLSPKKFIKTMIYIADKKPVAVLVRGDYEINEIKLQTLLGADGMLLADEQTVISVTNAPIGFAGPAGLKNIKIIADLSVAELSNALTGANKKDYHLKNVNFKRDYNADIVADIRKVKRGDTCPRCKKEELKFSRGIEIGHTFKLGDKYSKSMNASYLDANGKEKFIIMGCYGIGVTRILAAIIEQSHDDDGIIWTNNIAPFEVVIVPLNYADEKTKETTEKIYKELSSKGLDVLIDDRDERAGIKFKDADLIGIPYRITISEKNLANGNVELKARRDGKDDAVRLFKPEGVVIELLKIFKK</sequence>
<protein>
    <recommendedName>
        <fullName evidence="1">Proline--tRNA ligase</fullName>
        <ecNumber evidence="1">6.1.1.15</ecNumber>
    </recommendedName>
    <alternativeName>
        <fullName evidence="1">Prolyl-tRNA synthetase</fullName>
        <shortName evidence="1">ProRS</shortName>
    </alternativeName>
</protein>
<organism>
    <name type="scientific">Endomicrobium trichonymphae</name>
    <dbReference type="NCBI Taxonomy" id="1408204"/>
    <lineage>
        <taxon>Bacteria</taxon>
        <taxon>Pseudomonadati</taxon>
        <taxon>Elusimicrobiota</taxon>
        <taxon>Endomicrobiia</taxon>
        <taxon>Endomicrobiales</taxon>
        <taxon>Endomicrobiaceae</taxon>
        <taxon>Candidatus Endomicrobiellum</taxon>
    </lineage>
</organism>
<reference key="1">
    <citation type="journal article" date="2008" name="Proc. Natl. Acad. Sci. U.S.A.">
        <title>Complete genome of the uncultured termite group 1 bacteria in a single host protist cell.</title>
        <authorList>
            <person name="Hongoh Y."/>
            <person name="Sharma V.K."/>
            <person name="Prakash T."/>
            <person name="Noda S."/>
            <person name="Taylor T.D."/>
            <person name="Kudo T."/>
            <person name="Sakaki Y."/>
            <person name="Toyoda A."/>
            <person name="Hattori M."/>
            <person name="Ohkuma M."/>
        </authorList>
    </citation>
    <scope>NUCLEOTIDE SEQUENCE [LARGE SCALE GENOMIC DNA]</scope>
</reference>
<name>SYP_ENDTX</name>
<dbReference type="EC" id="6.1.1.15" evidence="1"/>
<dbReference type="EMBL" id="AP009510">
    <property type="protein sequence ID" value="BAG13895.1"/>
    <property type="molecule type" value="Genomic_DNA"/>
</dbReference>
<dbReference type="RefSeq" id="WP_015423421.1">
    <property type="nucleotide sequence ID" value="NC_020419.1"/>
</dbReference>
<dbReference type="SMR" id="B1H063"/>
<dbReference type="STRING" id="471821.TGRD_412"/>
<dbReference type="KEGG" id="eti:RSTT_446"/>
<dbReference type="KEGG" id="rsd:TGRD_412"/>
<dbReference type="PATRIC" id="fig|471821.5.peg.665"/>
<dbReference type="HOGENOM" id="CLU_016739_0_0_0"/>
<dbReference type="OrthoDB" id="9809052at2"/>
<dbReference type="Proteomes" id="UP000001691">
    <property type="component" value="Chromosome"/>
</dbReference>
<dbReference type="GO" id="GO:0005829">
    <property type="term" value="C:cytosol"/>
    <property type="evidence" value="ECO:0007669"/>
    <property type="project" value="TreeGrafter"/>
</dbReference>
<dbReference type="GO" id="GO:0002161">
    <property type="term" value="F:aminoacyl-tRNA deacylase activity"/>
    <property type="evidence" value="ECO:0007669"/>
    <property type="project" value="InterPro"/>
</dbReference>
<dbReference type="GO" id="GO:0005524">
    <property type="term" value="F:ATP binding"/>
    <property type="evidence" value="ECO:0007669"/>
    <property type="project" value="UniProtKB-UniRule"/>
</dbReference>
<dbReference type="GO" id="GO:0004827">
    <property type="term" value="F:proline-tRNA ligase activity"/>
    <property type="evidence" value="ECO:0007669"/>
    <property type="project" value="UniProtKB-UniRule"/>
</dbReference>
<dbReference type="GO" id="GO:0006433">
    <property type="term" value="P:prolyl-tRNA aminoacylation"/>
    <property type="evidence" value="ECO:0007669"/>
    <property type="project" value="UniProtKB-UniRule"/>
</dbReference>
<dbReference type="CDD" id="cd04334">
    <property type="entry name" value="ProRS-INS"/>
    <property type="match status" value="1"/>
</dbReference>
<dbReference type="CDD" id="cd00861">
    <property type="entry name" value="ProRS_anticodon_short"/>
    <property type="match status" value="1"/>
</dbReference>
<dbReference type="CDD" id="cd00779">
    <property type="entry name" value="ProRS_core_prok"/>
    <property type="match status" value="1"/>
</dbReference>
<dbReference type="FunFam" id="3.30.930.10:FF:000042">
    <property type="entry name" value="probable proline--tRNA ligase, mitochondrial"/>
    <property type="match status" value="1"/>
</dbReference>
<dbReference type="FunFam" id="3.30.930.10:FF:000065">
    <property type="entry name" value="Proline--tRNA ligase"/>
    <property type="match status" value="1"/>
</dbReference>
<dbReference type="FunFam" id="3.40.50.800:FF:000032">
    <property type="entry name" value="Proline--tRNA ligase"/>
    <property type="match status" value="1"/>
</dbReference>
<dbReference type="Gene3D" id="3.40.50.800">
    <property type="entry name" value="Anticodon-binding domain"/>
    <property type="match status" value="1"/>
</dbReference>
<dbReference type="Gene3D" id="3.30.930.10">
    <property type="entry name" value="Bira Bifunctional Protein, Domain 2"/>
    <property type="match status" value="2"/>
</dbReference>
<dbReference type="Gene3D" id="3.90.960.10">
    <property type="entry name" value="YbaK/aminoacyl-tRNA synthetase-associated domain"/>
    <property type="match status" value="1"/>
</dbReference>
<dbReference type="HAMAP" id="MF_01569">
    <property type="entry name" value="Pro_tRNA_synth_type1"/>
    <property type="match status" value="1"/>
</dbReference>
<dbReference type="InterPro" id="IPR002314">
    <property type="entry name" value="aa-tRNA-synt_IIb"/>
</dbReference>
<dbReference type="InterPro" id="IPR006195">
    <property type="entry name" value="aa-tRNA-synth_II"/>
</dbReference>
<dbReference type="InterPro" id="IPR045864">
    <property type="entry name" value="aa-tRNA-synth_II/BPL/LPL"/>
</dbReference>
<dbReference type="InterPro" id="IPR004154">
    <property type="entry name" value="Anticodon-bd"/>
</dbReference>
<dbReference type="InterPro" id="IPR036621">
    <property type="entry name" value="Anticodon-bd_dom_sf"/>
</dbReference>
<dbReference type="InterPro" id="IPR002316">
    <property type="entry name" value="Pro-tRNA-ligase_IIa"/>
</dbReference>
<dbReference type="InterPro" id="IPR004500">
    <property type="entry name" value="Pro-tRNA-synth_IIa_bac-type"/>
</dbReference>
<dbReference type="InterPro" id="IPR023717">
    <property type="entry name" value="Pro-tRNA-Synthase_IIa_type1"/>
</dbReference>
<dbReference type="InterPro" id="IPR050062">
    <property type="entry name" value="Pro-tRNA_synthetase"/>
</dbReference>
<dbReference type="InterPro" id="IPR044140">
    <property type="entry name" value="ProRS_anticodon_short"/>
</dbReference>
<dbReference type="InterPro" id="IPR033730">
    <property type="entry name" value="ProRS_core_prok"/>
</dbReference>
<dbReference type="InterPro" id="IPR036754">
    <property type="entry name" value="YbaK/aa-tRNA-synt-asso_dom_sf"/>
</dbReference>
<dbReference type="InterPro" id="IPR007214">
    <property type="entry name" value="YbaK/aa-tRNA-synth-assoc-dom"/>
</dbReference>
<dbReference type="NCBIfam" id="NF006625">
    <property type="entry name" value="PRK09194.1"/>
    <property type="match status" value="1"/>
</dbReference>
<dbReference type="NCBIfam" id="TIGR00409">
    <property type="entry name" value="proS_fam_II"/>
    <property type="match status" value="1"/>
</dbReference>
<dbReference type="PANTHER" id="PTHR42753">
    <property type="entry name" value="MITOCHONDRIAL RIBOSOME PROTEIN L39/PROLYL-TRNA LIGASE FAMILY MEMBER"/>
    <property type="match status" value="1"/>
</dbReference>
<dbReference type="PANTHER" id="PTHR42753:SF2">
    <property type="entry name" value="PROLINE--TRNA LIGASE"/>
    <property type="match status" value="1"/>
</dbReference>
<dbReference type="Pfam" id="PF03129">
    <property type="entry name" value="HGTP_anticodon"/>
    <property type="match status" value="1"/>
</dbReference>
<dbReference type="Pfam" id="PF00587">
    <property type="entry name" value="tRNA-synt_2b"/>
    <property type="match status" value="1"/>
</dbReference>
<dbReference type="Pfam" id="PF04073">
    <property type="entry name" value="tRNA_edit"/>
    <property type="match status" value="1"/>
</dbReference>
<dbReference type="PRINTS" id="PR01046">
    <property type="entry name" value="TRNASYNTHPRO"/>
</dbReference>
<dbReference type="SUPFAM" id="SSF52954">
    <property type="entry name" value="Class II aaRS ABD-related"/>
    <property type="match status" value="1"/>
</dbReference>
<dbReference type="SUPFAM" id="SSF55681">
    <property type="entry name" value="Class II aaRS and biotin synthetases"/>
    <property type="match status" value="1"/>
</dbReference>
<dbReference type="SUPFAM" id="SSF55826">
    <property type="entry name" value="YbaK/ProRS associated domain"/>
    <property type="match status" value="1"/>
</dbReference>
<dbReference type="PROSITE" id="PS50862">
    <property type="entry name" value="AA_TRNA_LIGASE_II"/>
    <property type="match status" value="1"/>
</dbReference>
<feature type="chain" id="PRO_1000199439" description="Proline--tRNA ligase">
    <location>
        <begin position="1"/>
        <end position="569"/>
    </location>
</feature>
<keyword id="KW-0030">Aminoacyl-tRNA synthetase</keyword>
<keyword id="KW-0067">ATP-binding</keyword>
<keyword id="KW-0963">Cytoplasm</keyword>
<keyword id="KW-0436">Ligase</keyword>
<keyword id="KW-0547">Nucleotide-binding</keyword>
<keyword id="KW-0648">Protein biosynthesis</keyword>
<gene>
    <name evidence="1" type="primary">proS</name>
    <name type="ordered locus">TGRD_412</name>
</gene>
<proteinExistence type="inferred from homology"/>
<accession>B1H063</accession>
<comment type="function">
    <text evidence="1">Catalyzes the attachment of proline to tRNA(Pro) in a two-step reaction: proline is first activated by ATP to form Pro-AMP and then transferred to the acceptor end of tRNA(Pro). As ProRS can inadvertently accommodate and process non-cognate amino acids such as alanine and cysteine, to avoid such errors it has two additional distinct editing activities against alanine. One activity is designated as 'pretransfer' editing and involves the tRNA(Pro)-independent hydrolysis of activated Ala-AMP. The other activity is designated 'posttransfer' editing and involves deacylation of mischarged Ala-tRNA(Pro). The misacylated Cys-tRNA(Pro) is not edited by ProRS.</text>
</comment>
<comment type="catalytic activity">
    <reaction evidence="1">
        <text>tRNA(Pro) + L-proline + ATP = L-prolyl-tRNA(Pro) + AMP + diphosphate</text>
        <dbReference type="Rhea" id="RHEA:14305"/>
        <dbReference type="Rhea" id="RHEA-COMP:9700"/>
        <dbReference type="Rhea" id="RHEA-COMP:9702"/>
        <dbReference type="ChEBI" id="CHEBI:30616"/>
        <dbReference type="ChEBI" id="CHEBI:33019"/>
        <dbReference type="ChEBI" id="CHEBI:60039"/>
        <dbReference type="ChEBI" id="CHEBI:78442"/>
        <dbReference type="ChEBI" id="CHEBI:78532"/>
        <dbReference type="ChEBI" id="CHEBI:456215"/>
        <dbReference type="EC" id="6.1.1.15"/>
    </reaction>
</comment>
<comment type="subunit">
    <text evidence="1">Homodimer.</text>
</comment>
<comment type="subcellular location">
    <subcellularLocation>
        <location evidence="1">Cytoplasm</location>
    </subcellularLocation>
</comment>
<comment type="domain">
    <text evidence="1">Consists of three domains: the N-terminal catalytic domain, the editing domain and the C-terminal anticodon-binding domain.</text>
</comment>
<comment type="similarity">
    <text evidence="1">Belongs to the class-II aminoacyl-tRNA synthetase family. ProS type 1 subfamily.</text>
</comment>
<evidence type="ECO:0000255" key="1">
    <source>
        <dbReference type="HAMAP-Rule" id="MF_01569"/>
    </source>
</evidence>